<protein>
    <recommendedName>
        <fullName evidence="4">Muscarinic toxin-like protein 1</fullName>
        <shortName evidence="4">MTLP-1</shortName>
    </recommendedName>
    <alternativeName>
        <fullName evidence="4">Muscarinic toxin-like protein 2</fullName>
        <shortName evidence="4">MTLP-2</shortName>
    </alternativeName>
</protein>
<organism>
    <name type="scientific">Naja naja</name>
    <name type="common">Indian cobra</name>
    <dbReference type="NCBI Taxonomy" id="35670"/>
    <lineage>
        <taxon>Eukaryota</taxon>
        <taxon>Metazoa</taxon>
        <taxon>Chordata</taxon>
        <taxon>Craniata</taxon>
        <taxon>Vertebrata</taxon>
        <taxon>Euteleostomi</taxon>
        <taxon>Lepidosauria</taxon>
        <taxon>Squamata</taxon>
        <taxon>Bifurcata</taxon>
        <taxon>Unidentata</taxon>
        <taxon>Episquamata</taxon>
        <taxon>Toxicofera</taxon>
        <taxon>Serpentes</taxon>
        <taxon>Colubroidea</taxon>
        <taxon>Elapidae</taxon>
        <taxon>Elapinae</taxon>
        <taxon>Naja</taxon>
    </lineage>
</organism>
<evidence type="ECO:0000250" key="1">
    <source>
        <dbReference type="UniProtKB" id="A8N286"/>
    </source>
</evidence>
<evidence type="ECO:0000250" key="2">
    <source>
        <dbReference type="UniProtKB" id="P82464"/>
    </source>
</evidence>
<evidence type="ECO:0000269" key="3">
    <source>
    </source>
</evidence>
<evidence type="ECO:0000303" key="4">
    <source>
    </source>
</evidence>
<evidence type="ECO:0000305" key="5"/>
<proteinExistence type="evidence at protein level"/>
<dbReference type="Proteomes" id="UP000694559">
    <property type="component" value="Unplaced"/>
</dbReference>
<dbReference type="GO" id="GO:0005576">
    <property type="term" value="C:extracellular region"/>
    <property type="evidence" value="ECO:0007669"/>
    <property type="project" value="UniProtKB-SubCell"/>
</dbReference>
<dbReference type="GO" id="GO:0090729">
    <property type="term" value="F:toxin activity"/>
    <property type="evidence" value="ECO:0007669"/>
    <property type="project" value="UniProtKB-KW"/>
</dbReference>
<keyword id="KW-0903">Direct protein sequencing</keyword>
<keyword id="KW-1015">Disulfide bond</keyword>
<keyword id="KW-1214">G-protein coupled acetylcholine receptor impairing toxin</keyword>
<keyword id="KW-1213">G-protein coupled receptor impairing toxin</keyword>
<keyword id="KW-0528">Neurotoxin</keyword>
<keyword id="KW-0629">Postsynaptic neurotoxin</keyword>
<keyword id="KW-1185">Reference proteome</keyword>
<keyword id="KW-0964">Secreted</keyword>
<keyword id="KW-0800">Toxin</keyword>
<sequence>TICYNHLTIRSEVTEICIICDDDYYF</sequence>
<comment type="function">
    <text evidence="1">Antagonist of muscle and neuronal nicotinic acetylcholine receptors (nAChR) with highest affinity for neuronal alpha-7/CHRNA7 nAChRs.</text>
</comment>
<comment type="subunit">
    <text evidence="1">Homodimer; non-covalently linked.</text>
</comment>
<comment type="subcellular location">
    <subcellularLocation>
        <location evidence="3">Secreted</location>
    </subcellularLocation>
</comment>
<comment type="tissue specificity">
    <text evidence="5">Expressed by the venom gland.</text>
</comment>
<comment type="similarity">
    <text evidence="5">Belongs to the three-finger toxin family. Short-chain subfamily. Orphan group VIII (haditoxin) sub-subfamily.</text>
</comment>
<name>3SO8_NAJNA</name>
<reference key="1">
    <citation type="journal article" date="2010" name="Biomed. Res.">
        <title>Molecular diversity in venom proteins of the Russell's viper (Daboia russellii russellii) and the Indian cobra (Naja naja) in Sri Lanka.</title>
        <authorList>
            <person name="Suzuki M."/>
            <person name="Itoh T."/>
            <person name="Bandaranayake B.M.A.I.K."/>
            <person name="Ranasinghe J.G."/>
            <person name="Athauda S.B."/>
            <person name="Moriyama A."/>
        </authorList>
    </citation>
    <scope>PROTEIN SEQUENCE</scope>
    <scope>SUBCELLULAR LOCATION</scope>
    <source>
        <tissue>Venom</tissue>
    </source>
</reference>
<feature type="chain" id="PRO_0000394693" description="Muscarinic toxin-like protein 1" evidence="3">
    <location>
        <begin position="1"/>
        <end position="26" status="greater than"/>
    </location>
</feature>
<feature type="disulfide bond" evidence="2">
    <location>
        <begin position="3"/>
        <end status="unknown"/>
    </location>
</feature>
<feature type="disulfide bond" evidence="2">
    <location>
        <begin position="17"/>
        <end status="unknown"/>
    </location>
</feature>
<feature type="non-terminal residue" evidence="4">
    <location>
        <position position="26"/>
    </location>
</feature>
<accession>P86544</accession>